<feature type="chain" id="PRO_0000374658" description="tRNA-2-methylthio-N(6)-dimethylallyladenosine synthase">
    <location>
        <begin position="1"/>
        <end position="474"/>
    </location>
</feature>
<feature type="domain" description="MTTase N-terminal" evidence="1">
    <location>
        <begin position="3"/>
        <end position="120"/>
    </location>
</feature>
<feature type="domain" description="Radical SAM core" evidence="2">
    <location>
        <begin position="143"/>
        <end position="375"/>
    </location>
</feature>
<feature type="domain" description="TRAM" evidence="1">
    <location>
        <begin position="378"/>
        <end position="441"/>
    </location>
</feature>
<feature type="binding site" evidence="1">
    <location>
        <position position="12"/>
    </location>
    <ligand>
        <name>[4Fe-4S] cluster</name>
        <dbReference type="ChEBI" id="CHEBI:49883"/>
        <label>1</label>
    </ligand>
</feature>
<feature type="binding site" evidence="1">
    <location>
        <position position="49"/>
    </location>
    <ligand>
        <name>[4Fe-4S] cluster</name>
        <dbReference type="ChEBI" id="CHEBI:49883"/>
        <label>1</label>
    </ligand>
</feature>
<feature type="binding site" evidence="1">
    <location>
        <position position="83"/>
    </location>
    <ligand>
        <name>[4Fe-4S] cluster</name>
        <dbReference type="ChEBI" id="CHEBI:49883"/>
        <label>1</label>
    </ligand>
</feature>
<feature type="binding site" evidence="1">
    <location>
        <position position="157"/>
    </location>
    <ligand>
        <name>[4Fe-4S] cluster</name>
        <dbReference type="ChEBI" id="CHEBI:49883"/>
        <label>2</label>
        <note>4Fe-4S-S-AdoMet</note>
    </ligand>
</feature>
<feature type="binding site" evidence="1">
    <location>
        <position position="161"/>
    </location>
    <ligand>
        <name>[4Fe-4S] cluster</name>
        <dbReference type="ChEBI" id="CHEBI:49883"/>
        <label>2</label>
        <note>4Fe-4S-S-AdoMet</note>
    </ligand>
</feature>
<feature type="binding site" evidence="1">
    <location>
        <position position="164"/>
    </location>
    <ligand>
        <name>[4Fe-4S] cluster</name>
        <dbReference type="ChEBI" id="CHEBI:49883"/>
        <label>2</label>
        <note>4Fe-4S-S-AdoMet</note>
    </ligand>
</feature>
<comment type="function">
    <text evidence="1">Catalyzes the methylthiolation of N6-(dimethylallyl)adenosine (i(6)A), leading to the formation of 2-methylthio-N6-(dimethylallyl)adenosine (ms(2)i(6)A) at position 37 in tRNAs that read codons beginning with uridine.</text>
</comment>
<comment type="catalytic activity">
    <reaction evidence="1">
        <text>N(6)-dimethylallyladenosine(37) in tRNA + (sulfur carrier)-SH + AH2 + 2 S-adenosyl-L-methionine = 2-methylsulfanyl-N(6)-dimethylallyladenosine(37) in tRNA + (sulfur carrier)-H + 5'-deoxyadenosine + L-methionine + A + S-adenosyl-L-homocysteine + 2 H(+)</text>
        <dbReference type="Rhea" id="RHEA:37067"/>
        <dbReference type="Rhea" id="RHEA-COMP:10375"/>
        <dbReference type="Rhea" id="RHEA-COMP:10376"/>
        <dbReference type="Rhea" id="RHEA-COMP:14737"/>
        <dbReference type="Rhea" id="RHEA-COMP:14739"/>
        <dbReference type="ChEBI" id="CHEBI:13193"/>
        <dbReference type="ChEBI" id="CHEBI:15378"/>
        <dbReference type="ChEBI" id="CHEBI:17319"/>
        <dbReference type="ChEBI" id="CHEBI:17499"/>
        <dbReference type="ChEBI" id="CHEBI:29917"/>
        <dbReference type="ChEBI" id="CHEBI:57844"/>
        <dbReference type="ChEBI" id="CHEBI:57856"/>
        <dbReference type="ChEBI" id="CHEBI:59789"/>
        <dbReference type="ChEBI" id="CHEBI:64428"/>
        <dbReference type="ChEBI" id="CHEBI:74415"/>
        <dbReference type="ChEBI" id="CHEBI:74417"/>
        <dbReference type="EC" id="2.8.4.3"/>
    </reaction>
</comment>
<comment type="cofactor">
    <cofactor evidence="1">
        <name>[4Fe-4S] cluster</name>
        <dbReference type="ChEBI" id="CHEBI:49883"/>
    </cofactor>
    <text evidence="1">Binds 2 [4Fe-4S] clusters. One cluster is coordinated with 3 cysteines and an exchangeable S-adenosyl-L-methionine.</text>
</comment>
<comment type="subunit">
    <text evidence="1">Monomer.</text>
</comment>
<comment type="subcellular location">
    <subcellularLocation>
        <location evidence="1">Cytoplasm</location>
    </subcellularLocation>
</comment>
<comment type="similarity">
    <text evidence="1">Belongs to the methylthiotransferase family. MiaB subfamily.</text>
</comment>
<comment type="sequence caution" evidence="3">
    <conflict type="erroneous initiation">
        <sequence resource="EMBL-CDS" id="ABG14441"/>
    </conflict>
</comment>
<gene>
    <name evidence="1" type="primary">miaB</name>
    <name type="ordered locus">YPA_2477</name>
</gene>
<evidence type="ECO:0000255" key="1">
    <source>
        <dbReference type="HAMAP-Rule" id="MF_01864"/>
    </source>
</evidence>
<evidence type="ECO:0000255" key="2">
    <source>
        <dbReference type="PROSITE-ProRule" id="PRU01266"/>
    </source>
</evidence>
<evidence type="ECO:0000305" key="3"/>
<organism>
    <name type="scientific">Yersinia pestis bv. Antiqua (strain Antiqua)</name>
    <dbReference type="NCBI Taxonomy" id="360102"/>
    <lineage>
        <taxon>Bacteria</taxon>
        <taxon>Pseudomonadati</taxon>
        <taxon>Pseudomonadota</taxon>
        <taxon>Gammaproteobacteria</taxon>
        <taxon>Enterobacterales</taxon>
        <taxon>Yersiniaceae</taxon>
        <taxon>Yersinia</taxon>
    </lineage>
</organism>
<sequence>MTKKLHIKTWGCQMNEYDSSKMADLLASTHGYQLTTIPEEADLLLLNTCSIREKAQEKVFSLLGQWKLLKEKNPQLIIGVGGCVASQEGEQLRQRAPCVDVIFGPQTLHRLPEMINHVQGTNSPVVDISFPEIEKFDRLPEPRAEGPTAFVSIMEGCNKYCTFCVVPYTRGEEVSRPSDDILFEIAQLAAQGVREVNLLGQNVNAYRGATYDGDICSFAELLRLVAAIDGIDRVRFTTSHPIEFTDDIIDVYRDTPELVSFLHLPVQSGSDRILTMMKRAHTALEYKAIIRKLRQARPDIQISSDFIVGFPGETQQDFEQTMKLVADIHFDTSYSFIYSPRPGTPAADLPNNVSEEEKKQRLHILQQRISQQAMEISRKMVGTVQRVLVEGTSRKNVMELAGRTENNRVVNFEGSPDMIGKFVDVEIVNVYASSLRGILLRTEDQMDLRTHESPQSVIARTRKENEIGVGIYQP</sequence>
<proteinExistence type="inferred from homology"/>
<keyword id="KW-0004">4Fe-4S</keyword>
<keyword id="KW-0963">Cytoplasm</keyword>
<keyword id="KW-0408">Iron</keyword>
<keyword id="KW-0411">Iron-sulfur</keyword>
<keyword id="KW-0479">Metal-binding</keyword>
<keyword id="KW-0949">S-adenosyl-L-methionine</keyword>
<keyword id="KW-0808">Transferase</keyword>
<keyword id="KW-0819">tRNA processing</keyword>
<protein>
    <recommendedName>
        <fullName evidence="1">tRNA-2-methylthio-N(6)-dimethylallyladenosine synthase</fullName>
        <ecNumber evidence="1">2.8.4.3</ecNumber>
    </recommendedName>
    <alternativeName>
        <fullName evidence="1">(Dimethylallyl)adenosine tRNA methylthiotransferase MiaB</fullName>
    </alternativeName>
    <alternativeName>
        <fullName evidence="1">tRNA-i(6)A37 methylthiotransferase</fullName>
    </alternativeName>
</protein>
<dbReference type="EC" id="2.8.4.3" evidence="1"/>
<dbReference type="EMBL" id="CP000308">
    <property type="protein sequence ID" value="ABG14441.1"/>
    <property type="status" value="ALT_INIT"/>
    <property type="molecule type" value="Genomic_DNA"/>
</dbReference>
<dbReference type="RefSeq" id="WP_002227875.1">
    <property type="nucleotide sequence ID" value="NZ_CP009906.1"/>
</dbReference>
<dbReference type="SMR" id="Q1C531"/>
<dbReference type="GeneID" id="57976075"/>
<dbReference type="KEGG" id="ypa:YPA_2477"/>
<dbReference type="Proteomes" id="UP000001971">
    <property type="component" value="Chromosome"/>
</dbReference>
<dbReference type="GO" id="GO:0005829">
    <property type="term" value="C:cytosol"/>
    <property type="evidence" value="ECO:0007669"/>
    <property type="project" value="TreeGrafter"/>
</dbReference>
<dbReference type="GO" id="GO:0051539">
    <property type="term" value="F:4 iron, 4 sulfur cluster binding"/>
    <property type="evidence" value="ECO:0007669"/>
    <property type="project" value="UniProtKB-UniRule"/>
</dbReference>
<dbReference type="GO" id="GO:0046872">
    <property type="term" value="F:metal ion binding"/>
    <property type="evidence" value="ECO:0007669"/>
    <property type="project" value="UniProtKB-KW"/>
</dbReference>
<dbReference type="GO" id="GO:0035597">
    <property type="term" value="F:N6-isopentenyladenosine methylthiotransferase activity"/>
    <property type="evidence" value="ECO:0007669"/>
    <property type="project" value="TreeGrafter"/>
</dbReference>
<dbReference type="CDD" id="cd01335">
    <property type="entry name" value="Radical_SAM"/>
    <property type="match status" value="1"/>
</dbReference>
<dbReference type="FunFam" id="3.40.50.12160:FF:000001">
    <property type="entry name" value="tRNA-2-methylthio-N(6)-dimethylallyladenosine synthase"/>
    <property type="match status" value="1"/>
</dbReference>
<dbReference type="FunFam" id="3.80.30.20:FF:000001">
    <property type="entry name" value="tRNA-2-methylthio-N(6)-dimethylallyladenosine synthase 2"/>
    <property type="match status" value="1"/>
</dbReference>
<dbReference type="Gene3D" id="3.40.50.12160">
    <property type="entry name" value="Methylthiotransferase, N-terminal domain"/>
    <property type="match status" value="1"/>
</dbReference>
<dbReference type="Gene3D" id="3.80.30.20">
    <property type="entry name" value="tm_1862 like domain"/>
    <property type="match status" value="1"/>
</dbReference>
<dbReference type="HAMAP" id="MF_01864">
    <property type="entry name" value="tRNA_metthiotr_MiaB"/>
    <property type="match status" value="1"/>
</dbReference>
<dbReference type="InterPro" id="IPR006638">
    <property type="entry name" value="Elp3/MiaA/NifB-like_rSAM"/>
</dbReference>
<dbReference type="InterPro" id="IPR005839">
    <property type="entry name" value="Methylthiotransferase"/>
</dbReference>
<dbReference type="InterPro" id="IPR020612">
    <property type="entry name" value="Methylthiotransferase_CS"/>
</dbReference>
<dbReference type="InterPro" id="IPR013848">
    <property type="entry name" value="Methylthiotransferase_N"/>
</dbReference>
<dbReference type="InterPro" id="IPR038135">
    <property type="entry name" value="Methylthiotransferase_N_sf"/>
</dbReference>
<dbReference type="InterPro" id="IPR006463">
    <property type="entry name" value="MiaB_methiolase"/>
</dbReference>
<dbReference type="InterPro" id="IPR007197">
    <property type="entry name" value="rSAM"/>
</dbReference>
<dbReference type="InterPro" id="IPR023404">
    <property type="entry name" value="rSAM_horseshoe"/>
</dbReference>
<dbReference type="InterPro" id="IPR002792">
    <property type="entry name" value="TRAM_dom"/>
</dbReference>
<dbReference type="NCBIfam" id="TIGR01574">
    <property type="entry name" value="miaB-methiolase"/>
    <property type="match status" value="1"/>
</dbReference>
<dbReference type="NCBIfam" id="TIGR00089">
    <property type="entry name" value="MiaB/RimO family radical SAM methylthiotransferase"/>
    <property type="match status" value="1"/>
</dbReference>
<dbReference type="PANTHER" id="PTHR43020">
    <property type="entry name" value="CDK5 REGULATORY SUBUNIT-ASSOCIATED PROTEIN 1"/>
    <property type="match status" value="1"/>
</dbReference>
<dbReference type="PANTHER" id="PTHR43020:SF2">
    <property type="entry name" value="MITOCHONDRIAL TRNA METHYLTHIOTRANSFERASE CDK5RAP1"/>
    <property type="match status" value="1"/>
</dbReference>
<dbReference type="Pfam" id="PF04055">
    <property type="entry name" value="Radical_SAM"/>
    <property type="match status" value="1"/>
</dbReference>
<dbReference type="Pfam" id="PF01938">
    <property type="entry name" value="TRAM"/>
    <property type="match status" value="1"/>
</dbReference>
<dbReference type="Pfam" id="PF00919">
    <property type="entry name" value="UPF0004"/>
    <property type="match status" value="1"/>
</dbReference>
<dbReference type="SFLD" id="SFLDF00273">
    <property type="entry name" value="(dimethylallyl)adenosine_tRNA"/>
    <property type="match status" value="1"/>
</dbReference>
<dbReference type="SFLD" id="SFLDG01082">
    <property type="entry name" value="B12-binding_domain_containing"/>
    <property type="match status" value="1"/>
</dbReference>
<dbReference type="SFLD" id="SFLDS00029">
    <property type="entry name" value="Radical_SAM"/>
    <property type="match status" value="1"/>
</dbReference>
<dbReference type="SMART" id="SM00729">
    <property type="entry name" value="Elp3"/>
    <property type="match status" value="1"/>
</dbReference>
<dbReference type="SUPFAM" id="SSF102114">
    <property type="entry name" value="Radical SAM enzymes"/>
    <property type="match status" value="1"/>
</dbReference>
<dbReference type="PROSITE" id="PS51449">
    <property type="entry name" value="MTTASE_N"/>
    <property type="match status" value="1"/>
</dbReference>
<dbReference type="PROSITE" id="PS01278">
    <property type="entry name" value="MTTASE_RADICAL"/>
    <property type="match status" value="1"/>
</dbReference>
<dbReference type="PROSITE" id="PS51918">
    <property type="entry name" value="RADICAL_SAM"/>
    <property type="match status" value="1"/>
</dbReference>
<dbReference type="PROSITE" id="PS50926">
    <property type="entry name" value="TRAM"/>
    <property type="match status" value="1"/>
</dbReference>
<reference key="1">
    <citation type="journal article" date="2006" name="J. Bacteriol.">
        <title>Complete genome sequence of Yersinia pestis strains Antiqua and Nepal516: evidence of gene reduction in an emerging pathogen.</title>
        <authorList>
            <person name="Chain P.S.G."/>
            <person name="Hu P."/>
            <person name="Malfatti S.A."/>
            <person name="Radnedge L."/>
            <person name="Larimer F."/>
            <person name="Vergez L.M."/>
            <person name="Worsham P."/>
            <person name="Chu M.C."/>
            <person name="Andersen G.L."/>
        </authorList>
    </citation>
    <scope>NUCLEOTIDE SEQUENCE [LARGE SCALE GENOMIC DNA]</scope>
    <source>
        <strain>Antiqua</strain>
    </source>
</reference>
<accession>Q1C531</accession>
<name>MIAB_YERPA</name>